<feature type="chain" id="PRO_0000419329" description="Probable santalene synthase">
    <location>
        <begin position="1"/>
        <end position="569"/>
    </location>
</feature>
<feature type="short sequence motif" description="DDXXD motif" evidence="3">
    <location>
        <begin position="321"/>
        <end position="325"/>
    </location>
</feature>
<feature type="binding site" evidence="3">
    <location>
        <position position="284"/>
    </location>
    <ligand>
        <name>(2E)-geranyl diphosphate</name>
        <dbReference type="ChEBI" id="CHEBI:58057"/>
    </ligand>
</feature>
<feature type="binding site" evidence="3">
    <location>
        <position position="321"/>
    </location>
    <ligand>
        <name>(2E)-geranyl diphosphate</name>
        <dbReference type="ChEBI" id="CHEBI:58057"/>
    </ligand>
</feature>
<feature type="binding site" evidence="3">
    <location>
        <position position="321"/>
    </location>
    <ligand>
        <name>Mg(2+)</name>
        <dbReference type="ChEBI" id="CHEBI:18420"/>
        <label>1</label>
    </ligand>
</feature>
<feature type="binding site" evidence="3">
    <location>
        <position position="321"/>
    </location>
    <ligand>
        <name>Mg(2+)</name>
        <dbReference type="ChEBI" id="CHEBI:18420"/>
        <label>2</label>
    </ligand>
</feature>
<feature type="binding site" evidence="3">
    <location>
        <position position="325"/>
    </location>
    <ligand>
        <name>(2E)-geranyl diphosphate</name>
        <dbReference type="ChEBI" id="CHEBI:58057"/>
    </ligand>
</feature>
<feature type="binding site" evidence="3">
    <location>
        <position position="325"/>
    </location>
    <ligand>
        <name>Mg(2+)</name>
        <dbReference type="ChEBI" id="CHEBI:18420"/>
        <label>1</label>
    </ligand>
</feature>
<feature type="binding site" evidence="3">
    <location>
        <position position="325"/>
    </location>
    <ligand>
        <name>Mg(2+)</name>
        <dbReference type="ChEBI" id="CHEBI:18420"/>
        <label>2</label>
    </ligand>
</feature>
<feature type="binding site" evidence="3">
    <location>
        <position position="460"/>
    </location>
    <ligand>
        <name>(2E)-geranyl diphosphate</name>
        <dbReference type="ChEBI" id="CHEBI:58057"/>
    </ligand>
</feature>
<feature type="binding site" evidence="3">
    <location>
        <position position="463"/>
    </location>
    <ligand>
        <name>(2E)-geranyl diphosphate</name>
        <dbReference type="ChEBI" id="CHEBI:58057"/>
    </ligand>
</feature>
<feature type="binding site" evidence="3">
    <location>
        <position position="463"/>
    </location>
    <ligand>
        <name>Mg(2+)</name>
        <dbReference type="ChEBI" id="CHEBI:18420"/>
        <label>3</label>
    </ligand>
</feature>
<feature type="binding site" evidence="3">
    <location>
        <position position="467"/>
    </location>
    <ligand>
        <name>Mg(2+)</name>
        <dbReference type="ChEBI" id="CHEBI:18420"/>
        <label>3</label>
    </ligand>
</feature>
<feature type="binding site" evidence="3">
    <location>
        <position position="471"/>
    </location>
    <ligand>
        <name>Mg(2+)</name>
        <dbReference type="ChEBI" id="CHEBI:18420"/>
        <label>3</label>
    </ligand>
</feature>
<sequence>MDSSTATAMTAPFIDPTDHVNLKTDTDASENRRMGNYKPSIWNYDFLQSLATHHNIVEERHLKLAEKLKGQVKFMFGAPMEPLAKLELVDVVQRLGLNHLFETEIKEVLFSIYKDGSNGWWFDHLHATSLRFRLLRQCGLFIPQDVFKMFQNKTGELDMKLCDNVKGLLSLYEASYLGWKGENILDEAKAFATKYLKSAWENISEKWLAKRVKHALALPLHWRVPRIEARWFIEAYEQEANMNPTLLKLAKLDFNMVQSIHQKEIGELARWWVTTGLDKLAFARNNLLQSYMWSCAIASDPKFKLARETIVEIGSVLTVVDDAYDVYGSMDELDLYTSSVERWSCVEIDKLPNTLKLIFMSMFNKTNEVGLRVQHERGYNSIPTFIKAWVQQCKSYQKEARWFHGGHTPPLEEYSLNGLVSIGFPLLLITGYVAIAENEAALDKVHPLPDLLHYSSLLSRLINDIGTSPDEMARGDNLKSIHCYMNETGASEEVAREHIKGVIEENWKILNQCCFDQSQFQEPFITFNLNSVRGSHFFYEFGDGFGVTDSWTKVDMKSVLIDPIPLGEE</sequence>
<organism>
    <name type="scientific">Santalum murrayanum</name>
    <name type="common">Bitter quandong</name>
    <dbReference type="NCBI Taxonomy" id="453085"/>
    <lineage>
        <taxon>Eukaryota</taxon>
        <taxon>Viridiplantae</taxon>
        <taxon>Streptophyta</taxon>
        <taxon>Embryophyta</taxon>
        <taxon>Tracheophyta</taxon>
        <taxon>Spermatophyta</taxon>
        <taxon>Magnoliopsida</taxon>
        <taxon>eudicotyledons</taxon>
        <taxon>Gunneridae</taxon>
        <taxon>Pentapetalae</taxon>
        <taxon>Santalales</taxon>
        <taxon>Santalaceae</taxon>
        <taxon>Santalum</taxon>
    </lineage>
</organism>
<proteinExistence type="inferred from homology"/>
<gene>
    <name type="primary">SSY</name>
</gene>
<evidence type="ECO:0000250" key="1"/>
<evidence type="ECO:0000250" key="2">
    <source>
        <dbReference type="UniProtKB" id="A0A1C9J6A7"/>
    </source>
</evidence>
<evidence type="ECO:0000250" key="3">
    <source>
        <dbReference type="UniProtKB" id="Q40577"/>
    </source>
</evidence>
<evidence type="ECO:0000305" key="4"/>
<accession>F6M8H8</accession>
<name>SMSY_SANMU</name>
<comment type="function">
    <text evidence="1">Catalyzes the formation of santalene.</text>
</comment>
<comment type="cofactor">
    <cofactor evidence="2">
        <name>Mg(2+)</name>
        <dbReference type="ChEBI" id="CHEBI:18420"/>
    </cofactor>
    <cofactor evidence="2">
        <name>Mn(2+)</name>
        <dbReference type="ChEBI" id="CHEBI:29035"/>
    </cofactor>
    <text evidence="2">Binds 3 Mg(2+) or Mn(2+) ions per subunit.</text>
</comment>
<comment type="domain">
    <text evidence="3">The Asp-Asp-Xaa-Xaa-Asp/Glu (DDXXD/E) motif is important for the catalytic activity, presumably through binding to Mg(2+).</text>
</comment>
<comment type="miscellaneous">
    <text>The oil-deficient phenotype of this species is not due to the absence of the genes encoding enzymes for santalene biosynthesis.</text>
</comment>
<comment type="similarity">
    <text evidence="4">Belongs to the terpene synthase family. Tpsb subfamily.</text>
</comment>
<keyword id="KW-0456">Lyase</keyword>
<keyword id="KW-0460">Magnesium</keyword>
<keyword id="KW-0464">Manganese</keyword>
<keyword id="KW-0479">Metal-binding</keyword>
<protein>
    <recommendedName>
        <fullName>Probable santalene synthase</fullName>
        <shortName>SmSSY</shortName>
        <ecNumber>4.2.3.-</ecNumber>
    </recommendedName>
</protein>
<dbReference type="EC" id="4.2.3.-"/>
<dbReference type="EMBL" id="JF746811">
    <property type="protein sequence ID" value="AEF32533.1"/>
    <property type="molecule type" value="Genomic_DNA"/>
</dbReference>
<dbReference type="SMR" id="F6M8H8"/>
<dbReference type="GO" id="GO:0000287">
    <property type="term" value="F:magnesium ion binding"/>
    <property type="evidence" value="ECO:0007669"/>
    <property type="project" value="InterPro"/>
</dbReference>
<dbReference type="GO" id="GO:0010333">
    <property type="term" value="F:terpene synthase activity"/>
    <property type="evidence" value="ECO:0007669"/>
    <property type="project" value="InterPro"/>
</dbReference>
<dbReference type="GO" id="GO:0016102">
    <property type="term" value="P:diterpenoid biosynthetic process"/>
    <property type="evidence" value="ECO:0007669"/>
    <property type="project" value="InterPro"/>
</dbReference>
<dbReference type="CDD" id="cd00684">
    <property type="entry name" value="Terpene_cyclase_plant_C1"/>
    <property type="match status" value="1"/>
</dbReference>
<dbReference type="FunFam" id="1.10.600.10:FF:000007">
    <property type="entry name" value="Isoprene synthase, chloroplastic"/>
    <property type="match status" value="1"/>
</dbReference>
<dbReference type="FunFam" id="1.50.10.130:FF:000001">
    <property type="entry name" value="Isoprene synthase, chloroplastic"/>
    <property type="match status" value="1"/>
</dbReference>
<dbReference type="Gene3D" id="1.10.600.10">
    <property type="entry name" value="Farnesyl Diphosphate Synthase"/>
    <property type="match status" value="1"/>
</dbReference>
<dbReference type="Gene3D" id="1.50.10.130">
    <property type="entry name" value="Terpene synthase, N-terminal domain"/>
    <property type="match status" value="1"/>
</dbReference>
<dbReference type="InterPro" id="IPR008949">
    <property type="entry name" value="Isoprenoid_synthase_dom_sf"/>
</dbReference>
<dbReference type="InterPro" id="IPR034741">
    <property type="entry name" value="Terpene_cyclase-like_1_C"/>
</dbReference>
<dbReference type="InterPro" id="IPR044814">
    <property type="entry name" value="Terpene_cyclase_plant_C1"/>
</dbReference>
<dbReference type="InterPro" id="IPR001906">
    <property type="entry name" value="Terpene_synth_N"/>
</dbReference>
<dbReference type="InterPro" id="IPR036965">
    <property type="entry name" value="Terpene_synth_N_sf"/>
</dbReference>
<dbReference type="InterPro" id="IPR050148">
    <property type="entry name" value="Terpene_synthase-like"/>
</dbReference>
<dbReference type="InterPro" id="IPR005630">
    <property type="entry name" value="Terpene_synthase_metal-bd"/>
</dbReference>
<dbReference type="InterPro" id="IPR008930">
    <property type="entry name" value="Terpenoid_cyclase/PrenylTrfase"/>
</dbReference>
<dbReference type="PANTHER" id="PTHR31225:SF245">
    <property type="entry name" value="(-)-ALPHA-TERPINEOL SYNTHASE-LIKE"/>
    <property type="match status" value="1"/>
</dbReference>
<dbReference type="PANTHER" id="PTHR31225">
    <property type="entry name" value="OS04G0344100 PROTEIN-RELATED"/>
    <property type="match status" value="1"/>
</dbReference>
<dbReference type="Pfam" id="PF01397">
    <property type="entry name" value="Terpene_synth"/>
    <property type="match status" value="1"/>
</dbReference>
<dbReference type="Pfam" id="PF03936">
    <property type="entry name" value="Terpene_synth_C"/>
    <property type="match status" value="1"/>
</dbReference>
<dbReference type="SFLD" id="SFLDS00005">
    <property type="entry name" value="Isoprenoid_Synthase_Type_I"/>
    <property type="match status" value="1"/>
</dbReference>
<dbReference type="SFLD" id="SFLDG01019">
    <property type="entry name" value="Terpene_Cyclase_Like_1_C_Termi"/>
    <property type="match status" value="1"/>
</dbReference>
<dbReference type="SUPFAM" id="SSF48239">
    <property type="entry name" value="Terpenoid cyclases/Protein prenyltransferases"/>
    <property type="match status" value="1"/>
</dbReference>
<dbReference type="SUPFAM" id="SSF48576">
    <property type="entry name" value="Terpenoid synthases"/>
    <property type="match status" value="1"/>
</dbReference>
<reference key="1">
    <citation type="journal article" date="2011" name="J. Biol. Chem.">
        <title>Sandalwood fragrance biosynthesis involves sesquiterpene synthases of both the terpene synthase (TPS)-a and TPS-b Subfamilies, including santalene synthases.</title>
        <authorList>
            <person name="Jones C.G."/>
            <person name="Moniodis J."/>
            <person name="Zulak K.G."/>
            <person name="Scaffidi A."/>
            <person name="Plummer J.A."/>
            <person name="Ghisalberti E.L."/>
            <person name="Barbour E.L."/>
            <person name="Bohlmann J."/>
        </authorList>
    </citation>
    <scope>NUCLEOTIDE SEQUENCE [GENOMIC DNA]</scope>
</reference>